<keyword id="KW-0066">ATP synthesis</keyword>
<keyword id="KW-0997">Cell inner membrane</keyword>
<keyword id="KW-1003">Cell membrane</keyword>
<keyword id="KW-0139">CF(1)</keyword>
<keyword id="KW-0375">Hydrogen ion transport</keyword>
<keyword id="KW-0406">Ion transport</keyword>
<keyword id="KW-0472">Membrane</keyword>
<keyword id="KW-1185">Reference proteome</keyword>
<keyword id="KW-0813">Transport</keyword>
<comment type="function">
    <text evidence="1">F(1)F(0) ATP synthase produces ATP from ADP in the presence of a proton or sodium gradient. F-type ATPases consist of two structural domains, F(1) containing the extramembraneous catalytic core and F(0) containing the membrane proton channel, linked together by a central stalk and a peripheral stalk. During catalysis, ATP synthesis in the catalytic domain of F(1) is coupled via a rotary mechanism of the central stalk subunits to proton translocation.</text>
</comment>
<comment type="function">
    <text evidence="1">This protein is part of the stalk that links CF(0) to CF(1). It either transmits conformational changes from CF(0) to CF(1) or is implicated in proton conduction.</text>
</comment>
<comment type="subunit">
    <text evidence="1">F-type ATPases have 2 components, F(1) - the catalytic core - and F(0) - the membrane proton channel. F(1) has five subunits: alpha(3), beta(3), gamma(1), delta(1), epsilon(1). F(0) has three main subunits: a(1), b(2) and c(10-14). The alpha and beta chains form an alternating ring which encloses part of the gamma chain. F(1) is attached to F(0) by a central stalk formed by the gamma and epsilon chains, while a peripheral stalk is formed by the delta and b chains.</text>
</comment>
<comment type="subcellular location">
    <subcellularLocation>
        <location evidence="1">Cell inner membrane</location>
        <topology evidence="1">Peripheral membrane protein</topology>
    </subcellularLocation>
</comment>
<comment type="similarity">
    <text evidence="1">Belongs to the ATPase delta chain family.</text>
</comment>
<proteinExistence type="inferred from homology"/>
<organism>
    <name type="scientific">Aquifex aeolicus (strain VF5)</name>
    <dbReference type="NCBI Taxonomy" id="224324"/>
    <lineage>
        <taxon>Bacteria</taxon>
        <taxon>Pseudomonadati</taxon>
        <taxon>Aquificota</taxon>
        <taxon>Aquificia</taxon>
        <taxon>Aquificales</taxon>
        <taxon>Aquificaceae</taxon>
        <taxon>Aquifex</taxon>
    </lineage>
</organism>
<feature type="chain" id="PRO_0000382055" description="ATP synthase subunit delta">
    <location>
        <begin position="1"/>
        <end position="181"/>
    </location>
</feature>
<reference key="1">
    <citation type="journal article" date="1998" name="Nature">
        <title>The complete genome of the hyperthermophilic bacterium Aquifex aeolicus.</title>
        <authorList>
            <person name="Deckert G."/>
            <person name="Warren P.V."/>
            <person name="Gaasterland T."/>
            <person name="Young W.G."/>
            <person name="Lenox A.L."/>
            <person name="Graham D.E."/>
            <person name="Overbeek R."/>
            <person name="Snead M.A."/>
            <person name="Keller M."/>
            <person name="Aujay M."/>
            <person name="Huber R."/>
            <person name="Feldman R.A."/>
            <person name="Short J.M."/>
            <person name="Olsen G.J."/>
            <person name="Swanson R.V."/>
        </authorList>
    </citation>
    <scope>NUCLEOTIDE SEQUENCE [LARGE SCALE GENOMIC DNA]</scope>
    <source>
        <strain>VF5</strain>
    </source>
</reference>
<name>ATPD_AQUAE</name>
<accession>O67527</accession>
<gene>
    <name evidence="1" type="primary">atpH</name>
    <name type="ordered locus">aq_1588</name>
</gene>
<dbReference type="EMBL" id="AE000657">
    <property type="protein sequence ID" value="AAC07479.1"/>
    <property type="molecule type" value="Genomic_DNA"/>
</dbReference>
<dbReference type="PIR" id="E70437">
    <property type="entry name" value="E70437"/>
</dbReference>
<dbReference type="RefSeq" id="NP_214092.1">
    <property type="nucleotide sequence ID" value="NC_000918.1"/>
</dbReference>
<dbReference type="RefSeq" id="WP_010881030.1">
    <property type="nucleotide sequence ID" value="NC_000918.1"/>
</dbReference>
<dbReference type="SMR" id="O67527"/>
<dbReference type="STRING" id="224324.aq_1588"/>
<dbReference type="EnsemblBacteria" id="AAC07479">
    <property type="protein sequence ID" value="AAC07479"/>
    <property type="gene ID" value="aq_1588"/>
</dbReference>
<dbReference type="KEGG" id="aae:aq_1588"/>
<dbReference type="PATRIC" id="fig|224324.8.peg.1226"/>
<dbReference type="eggNOG" id="COG0712">
    <property type="taxonomic scope" value="Bacteria"/>
</dbReference>
<dbReference type="HOGENOM" id="CLU_085114_1_1_0"/>
<dbReference type="InParanoid" id="O67527"/>
<dbReference type="OrthoDB" id="9802471at2"/>
<dbReference type="Proteomes" id="UP000000798">
    <property type="component" value="Chromosome"/>
</dbReference>
<dbReference type="GO" id="GO:0005886">
    <property type="term" value="C:plasma membrane"/>
    <property type="evidence" value="ECO:0007669"/>
    <property type="project" value="UniProtKB-SubCell"/>
</dbReference>
<dbReference type="GO" id="GO:0045259">
    <property type="term" value="C:proton-transporting ATP synthase complex"/>
    <property type="evidence" value="ECO:0007669"/>
    <property type="project" value="UniProtKB-KW"/>
</dbReference>
<dbReference type="GO" id="GO:0046933">
    <property type="term" value="F:proton-transporting ATP synthase activity, rotational mechanism"/>
    <property type="evidence" value="ECO:0007669"/>
    <property type="project" value="UniProtKB-UniRule"/>
</dbReference>
<dbReference type="GO" id="GO:0015986">
    <property type="term" value="P:proton motive force-driven ATP synthesis"/>
    <property type="evidence" value="ECO:0000318"/>
    <property type="project" value="GO_Central"/>
</dbReference>
<dbReference type="Gene3D" id="1.10.520.20">
    <property type="entry name" value="N-terminal domain of the delta subunit of the F1F0-ATP synthase"/>
    <property type="match status" value="1"/>
</dbReference>
<dbReference type="HAMAP" id="MF_01416">
    <property type="entry name" value="ATP_synth_delta_bact"/>
    <property type="match status" value="1"/>
</dbReference>
<dbReference type="InterPro" id="IPR026015">
    <property type="entry name" value="ATP_synth_OSCP/delta_N_sf"/>
</dbReference>
<dbReference type="InterPro" id="IPR000711">
    <property type="entry name" value="ATPase_OSCP/dsu"/>
</dbReference>
<dbReference type="NCBIfam" id="TIGR01145">
    <property type="entry name" value="ATP_synt_delta"/>
    <property type="match status" value="1"/>
</dbReference>
<dbReference type="PANTHER" id="PTHR11910">
    <property type="entry name" value="ATP SYNTHASE DELTA CHAIN"/>
    <property type="match status" value="1"/>
</dbReference>
<dbReference type="Pfam" id="PF00213">
    <property type="entry name" value="OSCP"/>
    <property type="match status" value="1"/>
</dbReference>
<dbReference type="SUPFAM" id="SSF47928">
    <property type="entry name" value="N-terminal domain of the delta subunit of the F1F0-ATP synthase"/>
    <property type="match status" value="1"/>
</dbReference>
<protein>
    <recommendedName>
        <fullName evidence="1">ATP synthase subunit delta</fullName>
    </recommendedName>
    <alternativeName>
        <fullName evidence="1">ATP synthase F(1) sector subunit delta</fullName>
    </alternativeName>
    <alternativeName>
        <fullName evidence="1">F-type ATPase subunit delta</fullName>
        <shortName evidence="1">F-ATPase subunit delta</shortName>
    </alternativeName>
</protein>
<sequence length="181" mass="20736">MLKRKELARKAVRLIVKKVPKEKESILKVDEFLGTLSTAYRKDKLLRNFFLSPQIDRNAKVKALESLAKKYDVPKEVLEVLEYLIDINAMALIPEIKRLYELELEKLMGMLKGELILAKKPSKKLLEKITKTINDILNRQIEIEVKEDPSLIGGFVFKTQAFVLDTSVKTQLEKLARVGGV</sequence>
<evidence type="ECO:0000255" key="1">
    <source>
        <dbReference type="HAMAP-Rule" id="MF_01416"/>
    </source>
</evidence>